<protein>
    <recommendedName>
        <fullName>Putative DNA-3-methyladenine glycosylase YfjP</fullName>
        <ecNumber>3.2.2.21</ecNumber>
    </recommendedName>
</protein>
<organism>
    <name type="scientific">Bacillus subtilis (strain 168)</name>
    <dbReference type="NCBI Taxonomy" id="224308"/>
    <lineage>
        <taxon>Bacteria</taxon>
        <taxon>Bacillati</taxon>
        <taxon>Bacillota</taxon>
        <taxon>Bacilli</taxon>
        <taxon>Bacillales</taxon>
        <taxon>Bacillaceae</taxon>
        <taxon>Bacillus</taxon>
    </lineage>
</organism>
<accession>O31544</accession>
<accession>Q79F09</accession>
<proteinExistence type="inferred from homology"/>
<sequence>MWKEKVSVTPPYHFDRVLDRLSLDPLNAVDREAREVRVPIRNQAGDVCIVKVQALGHAGEPEFLVSGETDQGEMMKEIKRIFQWENHLQHVLDHFSKTSLSAIFEEHAGTPLVLDYSVYNCMMKCIIHQQLNLSFAYTLTERFVHAFGEQKDGVWCYPKPETIAELDYQDLRDLQFSMRKAEYTIDTSRMIAEGTLSLSELPHMADEDIMKKLIKIRGIGPWTVQNVLMFGLGRPNLFPLADIGLQNAIKRHFQLDDKPAKDVMLAMSKEWEPYLSYASLYLWRSIE</sequence>
<keyword id="KW-0227">DNA damage</keyword>
<keyword id="KW-0234">DNA repair</keyword>
<keyword id="KW-0378">Hydrolase</keyword>
<keyword id="KW-1185">Reference proteome</keyword>
<dbReference type="EC" id="3.2.2.21"/>
<dbReference type="EMBL" id="D78509">
    <property type="protein sequence ID" value="BAA24301.1"/>
    <property type="molecule type" value="Genomic_DNA"/>
</dbReference>
<dbReference type="EMBL" id="AL009126">
    <property type="protein sequence ID" value="CAB12630.1"/>
    <property type="molecule type" value="Genomic_DNA"/>
</dbReference>
<dbReference type="PIR" id="G69806">
    <property type="entry name" value="G69806"/>
</dbReference>
<dbReference type="RefSeq" id="NP_388682.1">
    <property type="nucleotide sequence ID" value="NC_000964.3"/>
</dbReference>
<dbReference type="RefSeq" id="WP_003233646.1">
    <property type="nucleotide sequence ID" value="NZ_OZ025638.1"/>
</dbReference>
<dbReference type="SMR" id="O31544"/>
<dbReference type="FunCoup" id="O31544">
    <property type="interactions" value="228"/>
</dbReference>
<dbReference type="STRING" id="224308.BSU08010"/>
<dbReference type="PaxDb" id="224308-BSU08010"/>
<dbReference type="EnsemblBacteria" id="CAB12630">
    <property type="protein sequence ID" value="CAB12630"/>
    <property type="gene ID" value="BSU_08010"/>
</dbReference>
<dbReference type="GeneID" id="939192"/>
<dbReference type="KEGG" id="bsu:BSU08010"/>
<dbReference type="PATRIC" id="fig|224308.179.peg.866"/>
<dbReference type="eggNOG" id="COG0122">
    <property type="taxonomic scope" value="Bacteria"/>
</dbReference>
<dbReference type="InParanoid" id="O31544"/>
<dbReference type="OrthoDB" id="9785929at2"/>
<dbReference type="PhylomeDB" id="O31544"/>
<dbReference type="BioCyc" id="BSUB:BSU08010-MONOMER"/>
<dbReference type="PRO" id="PR:O31544"/>
<dbReference type="Proteomes" id="UP000001570">
    <property type="component" value="Chromosome"/>
</dbReference>
<dbReference type="GO" id="GO:0005737">
    <property type="term" value="C:cytoplasm"/>
    <property type="evidence" value="ECO:0000318"/>
    <property type="project" value="GO_Central"/>
</dbReference>
<dbReference type="GO" id="GO:0032993">
    <property type="term" value="C:protein-DNA complex"/>
    <property type="evidence" value="ECO:0000318"/>
    <property type="project" value="GO_Central"/>
</dbReference>
<dbReference type="GO" id="GO:0032131">
    <property type="term" value="F:alkylated DNA binding"/>
    <property type="evidence" value="ECO:0000318"/>
    <property type="project" value="GO_Central"/>
</dbReference>
<dbReference type="GO" id="GO:0008725">
    <property type="term" value="F:DNA-3-methyladenine glycosylase activity"/>
    <property type="evidence" value="ECO:0000318"/>
    <property type="project" value="GO_Central"/>
</dbReference>
<dbReference type="GO" id="GO:0043916">
    <property type="term" value="F:DNA-7-methylguanine glycosylase activity"/>
    <property type="evidence" value="ECO:0000318"/>
    <property type="project" value="GO_Central"/>
</dbReference>
<dbReference type="GO" id="GO:0006285">
    <property type="term" value="P:base-excision repair, AP site formation"/>
    <property type="evidence" value="ECO:0000318"/>
    <property type="project" value="GO_Central"/>
</dbReference>
<dbReference type="GO" id="GO:0006307">
    <property type="term" value="P:DNA alkylation repair"/>
    <property type="evidence" value="ECO:0000318"/>
    <property type="project" value="GO_Central"/>
</dbReference>
<dbReference type="CDD" id="cd00056">
    <property type="entry name" value="ENDO3c"/>
    <property type="match status" value="1"/>
</dbReference>
<dbReference type="FunFam" id="1.10.340.30:FF:000004">
    <property type="entry name" value="DNA-3-methyladenine glycosylase II"/>
    <property type="match status" value="1"/>
</dbReference>
<dbReference type="Gene3D" id="1.10.1670.40">
    <property type="match status" value="1"/>
</dbReference>
<dbReference type="Gene3D" id="1.10.340.30">
    <property type="entry name" value="Hypothetical protein, domain 2"/>
    <property type="match status" value="1"/>
</dbReference>
<dbReference type="InterPro" id="IPR051912">
    <property type="entry name" value="Alkylbase_DNA_Glycosylase/TA"/>
</dbReference>
<dbReference type="InterPro" id="IPR011257">
    <property type="entry name" value="DNA_glycosylase"/>
</dbReference>
<dbReference type="InterPro" id="IPR003265">
    <property type="entry name" value="HhH-GPD_domain"/>
</dbReference>
<dbReference type="PANTHER" id="PTHR43003">
    <property type="entry name" value="DNA-3-METHYLADENINE GLYCOSYLASE"/>
    <property type="match status" value="1"/>
</dbReference>
<dbReference type="PANTHER" id="PTHR43003:SF5">
    <property type="entry name" value="DNA-3-METHYLADENINE GLYCOSYLASE"/>
    <property type="match status" value="1"/>
</dbReference>
<dbReference type="Pfam" id="PF00730">
    <property type="entry name" value="HhH-GPD"/>
    <property type="match status" value="1"/>
</dbReference>
<dbReference type="SMART" id="SM00478">
    <property type="entry name" value="ENDO3c"/>
    <property type="match status" value="1"/>
</dbReference>
<dbReference type="SUPFAM" id="SSF48150">
    <property type="entry name" value="DNA-glycosylase"/>
    <property type="match status" value="1"/>
</dbReference>
<evidence type="ECO:0000250" key="1"/>
<evidence type="ECO:0000305" key="2"/>
<comment type="function">
    <text evidence="1">Hydrolysis of the deoxyribose N-glycosidic bond to excise 3-methyladenine, 3-methylguanine, 7-methylguanine, O2-methylthymine, and O2-methylcytosine from the damaged DNA polymer formed by alkylation lesions.</text>
</comment>
<comment type="catalytic activity">
    <reaction>
        <text>Hydrolysis of alkylated DNA, releasing 3-methyladenine, 3-methylguanine, 7-methylguanine and 7-methyladenine.</text>
        <dbReference type="EC" id="3.2.2.21"/>
    </reaction>
</comment>
<comment type="similarity">
    <text evidence="2">Belongs to the alkylbase DNA glycosidase AlkA family.</text>
</comment>
<gene>
    <name type="primary">yfjP</name>
    <name type="ordered locus">BSU08010</name>
</gene>
<feature type="chain" id="PRO_0000360864" description="Putative DNA-3-methyladenine glycosylase YfjP">
    <location>
        <begin position="1"/>
        <end position="287"/>
    </location>
</feature>
<feature type="active site" description="Proton acceptor" evidence="1">
    <location>
        <position position="242"/>
    </location>
</feature>
<feature type="site" description="Determinant for substrate specificity and/or activity" evidence="1">
    <location>
        <position position="222"/>
    </location>
</feature>
<reference key="1">
    <citation type="journal article" date="1996" name="Microbiology">
        <title>Cloning and sequencing of a 40.6 kb segment in the 73 degrees-76 degrees region of the Bacillus subtilis chromosome containing genes for trehalose metabolism and acetoin utilization.</title>
        <authorList>
            <person name="Yamamoto H."/>
            <person name="Uchiyama S."/>
            <person name="Sekiguchi J."/>
        </authorList>
    </citation>
    <scope>NUCLEOTIDE SEQUENCE [GENOMIC DNA]</scope>
    <source>
        <strain>168 / AC327</strain>
    </source>
</reference>
<reference key="2">
    <citation type="journal article" date="1997" name="Nature">
        <title>The complete genome sequence of the Gram-positive bacterium Bacillus subtilis.</title>
        <authorList>
            <person name="Kunst F."/>
            <person name="Ogasawara N."/>
            <person name="Moszer I."/>
            <person name="Albertini A.M."/>
            <person name="Alloni G."/>
            <person name="Azevedo V."/>
            <person name="Bertero M.G."/>
            <person name="Bessieres P."/>
            <person name="Bolotin A."/>
            <person name="Borchert S."/>
            <person name="Borriss R."/>
            <person name="Boursier L."/>
            <person name="Brans A."/>
            <person name="Braun M."/>
            <person name="Brignell S.C."/>
            <person name="Bron S."/>
            <person name="Brouillet S."/>
            <person name="Bruschi C.V."/>
            <person name="Caldwell B."/>
            <person name="Capuano V."/>
            <person name="Carter N.M."/>
            <person name="Choi S.-K."/>
            <person name="Codani J.-J."/>
            <person name="Connerton I.F."/>
            <person name="Cummings N.J."/>
            <person name="Daniel R.A."/>
            <person name="Denizot F."/>
            <person name="Devine K.M."/>
            <person name="Duesterhoeft A."/>
            <person name="Ehrlich S.D."/>
            <person name="Emmerson P.T."/>
            <person name="Entian K.-D."/>
            <person name="Errington J."/>
            <person name="Fabret C."/>
            <person name="Ferrari E."/>
            <person name="Foulger D."/>
            <person name="Fritz C."/>
            <person name="Fujita M."/>
            <person name="Fujita Y."/>
            <person name="Fuma S."/>
            <person name="Galizzi A."/>
            <person name="Galleron N."/>
            <person name="Ghim S.-Y."/>
            <person name="Glaser P."/>
            <person name="Goffeau A."/>
            <person name="Golightly E.J."/>
            <person name="Grandi G."/>
            <person name="Guiseppi G."/>
            <person name="Guy B.J."/>
            <person name="Haga K."/>
            <person name="Haiech J."/>
            <person name="Harwood C.R."/>
            <person name="Henaut A."/>
            <person name="Hilbert H."/>
            <person name="Holsappel S."/>
            <person name="Hosono S."/>
            <person name="Hullo M.-F."/>
            <person name="Itaya M."/>
            <person name="Jones L.-M."/>
            <person name="Joris B."/>
            <person name="Karamata D."/>
            <person name="Kasahara Y."/>
            <person name="Klaerr-Blanchard M."/>
            <person name="Klein C."/>
            <person name="Kobayashi Y."/>
            <person name="Koetter P."/>
            <person name="Koningstein G."/>
            <person name="Krogh S."/>
            <person name="Kumano M."/>
            <person name="Kurita K."/>
            <person name="Lapidus A."/>
            <person name="Lardinois S."/>
            <person name="Lauber J."/>
            <person name="Lazarevic V."/>
            <person name="Lee S.-M."/>
            <person name="Levine A."/>
            <person name="Liu H."/>
            <person name="Masuda S."/>
            <person name="Mauel C."/>
            <person name="Medigue C."/>
            <person name="Medina N."/>
            <person name="Mellado R.P."/>
            <person name="Mizuno M."/>
            <person name="Moestl D."/>
            <person name="Nakai S."/>
            <person name="Noback M."/>
            <person name="Noone D."/>
            <person name="O'Reilly M."/>
            <person name="Ogawa K."/>
            <person name="Ogiwara A."/>
            <person name="Oudega B."/>
            <person name="Park S.-H."/>
            <person name="Parro V."/>
            <person name="Pohl T.M."/>
            <person name="Portetelle D."/>
            <person name="Porwollik S."/>
            <person name="Prescott A.M."/>
            <person name="Presecan E."/>
            <person name="Pujic P."/>
            <person name="Purnelle B."/>
            <person name="Rapoport G."/>
            <person name="Rey M."/>
            <person name="Reynolds S."/>
            <person name="Rieger M."/>
            <person name="Rivolta C."/>
            <person name="Rocha E."/>
            <person name="Roche B."/>
            <person name="Rose M."/>
            <person name="Sadaie Y."/>
            <person name="Sato T."/>
            <person name="Scanlan E."/>
            <person name="Schleich S."/>
            <person name="Schroeter R."/>
            <person name="Scoffone F."/>
            <person name="Sekiguchi J."/>
            <person name="Sekowska A."/>
            <person name="Seror S.J."/>
            <person name="Serror P."/>
            <person name="Shin B.-S."/>
            <person name="Soldo B."/>
            <person name="Sorokin A."/>
            <person name="Tacconi E."/>
            <person name="Takagi T."/>
            <person name="Takahashi H."/>
            <person name="Takemaru K."/>
            <person name="Takeuchi M."/>
            <person name="Tamakoshi A."/>
            <person name="Tanaka T."/>
            <person name="Terpstra P."/>
            <person name="Tognoni A."/>
            <person name="Tosato V."/>
            <person name="Uchiyama S."/>
            <person name="Vandenbol M."/>
            <person name="Vannier F."/>
            <person name="Vassarotti A."/>
            <person name="Viari A."/>
            <person name="Wambutt R."/>
            <person name="Wedler E."/>
            <person name="Wedler H."/>
            <person name="Weitzenegger T."/>
            <person name="Winters P."/>
            <person name="Wipat A."/>
            <person name="Yamamoto H."/>
            <person name="Yamane K."/>
            <person name="Yasumoto K."/>
            <person name="Yata K."/>
            <person name="Yoshida K."/>
            <person name="Yoshikawa H.-F."/>
            <person name="Zumstein E."/>
            <person name="Yoshikawa H."/>
            <person name="Danchin A."/>
        </authorList>
    </citation>
    <scope>NUCLEOTIDE SEQUENCE [LARGE SCALE GENOMIC DNA]</scope>
    <source>
        <strain>168</strain>
    </source>
</reference>
<name>YFJP_BACSU</name>